<evidence type="ECO:0000255" key="1">
    <source>
        <dbReference type="HAMAP-Rule" id="MF_00421"/>
    </source>
</evidence>
<proteinExistence type="inferred from homology"/>
<dbReference type="EC" id="6.3.5.3" evidence="1"/>
<dbReference type="EC" id="3.5.1.2" evidence="1"/>
<dbReference type="EMBL" id="AP008226">
    <property type="protein sequence ID" value="BAD71340.1"/>
    <property type="molecule type" value="Genomic_DNA"/>
</dbReference>
<dbReference type="RefSeq" id="WP_011228731.1">
    <property type="nucleotide sequence ID" value="NC_006461.1"/>
</dbReference>
<dbReference type="RefSeq" id="YP_144783.1">
    <property type="nucleotide sequence ID" value="NC_006461.1"/>
</dbReference>
<dbReference type="SMR" id="Q5SI57"/>
<dbReference type="EnsemblBacteria" id="BAD71340">
    <property type="protein sequence ID" value="BAD71340"/>
    <property type="gene ID" value="BAD71340"/>
</dbReference>
<dbReference type="GeneID" id="3169903"/>
<dbReference type="KEGG" id="ttj:TTHA1517"/>
<dbReference type="PATRIC" id="fig|300852.9.peg.1492"/>
<dbReference type="eggNOG" id="COG0047">
    <property type="taxonomic scope" value="Bacteria"/>
</dbReference>
<dbReference type="HOGENOM" id="CLU_001031_3_1_0"/>
<dbReference type="PhylomeDB" id="Q5SI57"/>
<dbReference type="UniPathway" id="UPA00074">
    <property type="reaction ID" value="UER00128"/>
</dbReference>
<dbReference type="Proteomes" id="UP000000532">
    <property type="component" value="Chromosome"/>
</dbReference>
<dbReference type="GO" id="GO:0005737">
    <property type="term" value="C:cytoplasm"/>
    <property type="evidence" value="ECO:0007669"/>
    <property type="project" value="UniProtKB-SubCell"/>
</dbReference>
<dbReference type="GO" id="GO:0005524">
    <property type="term" value="F:ATP binding"/>
    <property type="evidence" value="ECO:0007669"/>
    <property type="project" value="UniProtKB-KW"/>
</dbReference>
<dbReference type="GO" id="GO:0004359">
    <property type="term" value="F:glutaminase activity"/>
    <property type="evidence" value="ECO:0007669"/>
    <property type="project" value="UniProtKB-EC"/>
</dbReference>
<dbReference type="GO" id="GO:0004642">
    <property type="term" value="F:phosphoribosylformylglycinamidine synthase activity"/>
    <property type="evidence" value="ECO:0007669"/>
    <property type="project" value="UniProtKB-UniRule"/>
</dbReference>
<dbReference type="GO" id="GO:0006189">
    <property type="term" value="P:'de novo' IMP biosynthetic process"/>
    <property type="evidence" value="ECO:0007669"/>
    <property type="project" value="UniProtKB-UniRule"/>
</dbReference>
<dbReference type="CDD" id="cd01740">
    <property type="entry name" value="GATase1_FGAR_AT"/>
    <property type="match status" value="1"/>
</dbReference>
<dbReference type="Gene3D" id="3.40.50.880">
    <property type="match status" value="1"/>
</dbReference>
<dbReference type="HAMAP" id="MF_00421">
    <property type="entry name" value="PurQ"/>
    <property type="match status" value="1"/>
</dbReference>
<dbReference type="InterPro" id="IPR029062">
    <property type="entry name" value="Class_I_gatase-like"/>
</dbReference>
<dbReference type="InterPro" id="IPR010075">
    <property type="entry name" value="PRibForGlyAmidine_synth_PurQ"/>
</dbReference>
<dbReference type="NCBIfam" id="TIGR01737">
    <property type="entry name" value="FGAM_synth_I"/>
    <property type="match status" value="1"/>
</dbReference>
<dbReference type="NCBIfam" id="NF002957">
    <property type="entry name" value="PRK03619.1"/>
    <property type="match status" value="1"/>
</dbReference>
<dbReference type="PANTHER" id="PTHR47552">
    <property type="entry name" value="PHOSPHORIBOSYLFORMYLGLYCINAMIDINE SYNTHASE SUBUNIT PURQ"/>
    <property type="match status" value="1"/>
</dbReference>
<dbReference type="PANTHER" id="PTHR47552:SF1">
    <property type="entry name" value="PHOSPHORIBOSYLFORMYLGLYCINAMIDINE SYNTHASE SUBUNIT PURQ"/>
    <property type="match status" value="1"/>
</dbReference>
<dbReference type="Pfam" id="PF13507">
    <property type="entry name" value="GATase_5"/>
    <property type="match status" value="1"/>
</dbReference>
<dbReference type="PIRSF" id="PIRSF001586">
    <property type="entry name" value="FGAM_synth_I"/>
    <property type="match status" value="1"/>
</dbReference>
<dbReference type="SMART" id="SM01211">
    <property type="entry name" value="GATase_5"/>
    <property type="match status" value="1"/>
</dbReference>
<dbReference type="SUPFAM" id="SSF52317">
    <property type="entry name" value="Class I glutamine amidotransferase-like"/>
    <property type="match status" value="1"/>
</dbReference>
<dbReference type="PROSITE" id="PS51273">
    <property type="entry name" value="GATASE_TYPE_1"/>
    <property type="match status" value="1"/>
</dbReference>
<sequence length="227" mass="25079">MRWAIVRFPGANCDEDARFALEKAGIRAEFVWHTERDLRGFDGVFLPGGFSYGDYLRAGALAAKSPVMEAVRRFAEEGRYVVGVCNGFQILTEAGLLPGALLANLNLHFTCKEVGVRVERNDLPFTRLYPRGQVLRLPIAHGEGRYYADPETLARLEGEGLVVFRYAPLKDEADYNPNGSLHDIAGIVSEKGNVLGMMPHPERAVDEVLGNTDGLPFFLGLVKEVAR</sequence>
<feature type="chain" id="PRO_0000100600" description="Phosphoribosylformylglycinamidine synthase subunit PurQ">
    <location>
        <begin position="1"/>
        <end position="227"/>
    </location>
</feature>
<feature type="domain" description="Glutamine amidotransferase type-1" evidence="1">
    <location>
        <begin position="2"/>
        <end position="227"/>
    </location>
</feature>
<feature type="active site" description="Nucleophile" evidence="1">
    <location>
        <position position="85"/>
    </location>
</feature>
<feature type="active site" evidence="1">
    <location>
        <position position="200"/>
    </location>
</feature>
<feature type="active site" evidence="1">
    <location>
        <position position="202"/>
    </location>
</feature>
<accession>Q5SI57</accession>
<name>PURQ_THET8</name>
<gene>
    <name evidence="1" type="primary">purQ</name>
    <name type="ordered locus">TTHA1517</name>
</gene>
<organism>
    <name type="scientific">Thermus thermophilus (strain ATCC 27634 / DSM 579 / HB8)</name>
    <dbReference type="NCBI Taxonomy" id="300852"/>
    <lineage>
        <taxon>Bacteria</taxon>
        <taxon>Thermotogati</taxon>
        <taxon>Deinococcota</taxon>
        <taxon>Deinococci</taxon>
        <taxon>Thermales</taxon>
        <taxon>Thermaceae</taxon>
        <taxon>Thermus</taxon>
    </lineage>
</organism>
<reference key="1">
    <citation type="submission" date="2004-11" db="EMBL/GenBank/DDBJ databases">
        <title>Complete genome sequence of Thermus thermophilus HB8.</title>
        <authorList>
            <person name="Masui R."/>
            <person name="Kurokawa K."/>
            <person name="Nakagawa N."/>
            <person name="Tokunaga F."/>
            <person name="Koyama Y."/>
            <person name="Shibata T."/>
            <person name="Oshima T."/>
            <person name="Yokoyama S."/>
            <person name="Yasunaga T."/>
            <person name="Kuramitsu S."/>
        </authorList>
    </citation>
    <scope>NUCLEOTIDE SEQUENCE [LARGE SCALE GENOMIC DNA]</scope>
    <source>
        <strain>ATCC 27634 / DSM 579 / HB8</strain>
    </source>
</reference>
<keyword id="KW-0067">ATP-binding</keyword>
<keyword id="KW-0963">Cytoplasm</keyword>
<keyword id="KW-0315">Glutamine amidotransferase</keyword>
<keyword id="KW-0378">Hydrolase</keyword>
<keyword id="KW-0436">Ligase</keyword>
<keyword id="KW-0547">Nucleotide-binding</keyword>
<keyword id="KW-0658">Purine biosynthesis</keyword>
<keyword id="KW-1185">Reference proteome</keyword>
<comment type="function">
    <text evidence="1">Part of the phosphoribosylformylglycinamidine synthase complex involved in the purines biosynthetic pathway. Catalyzes the ATP-dependent conversion of formylglycinamide ribonucleotide (FGAR) and glutamine to yield formylglycinamidine ribonucleotide (FGAM) and glutamate. The FGAM synthase complex is composed of three subunits. PurQ produces an ammonia molecule by converting glutamine to glutamate. PurL transfers the ammonia molecule to FGAR to form FGAM in an ATP-dependent manner. PurS interacts with PurQ and PurL and is thought to assist in the transfer of the ammonia molecule from PurQ to PurL.</text>
</comment>
<comment type="catalytic activity">
    <reaction evidence="1">
        <text>N(2)-formyl-N(1)-(5-phospho-beta-D-ribosyl)glycinamide + L-glutamine + ATP + H2O = 2-formamido-N(1)-(5-O-phospho-beta-D-ribosyl)acetamidine + L-glutamate + ADP + phosphate + H(+)</text>
        <dbReference type="Rhea" id="RHEA:17129"/>
        <dbReference type="ChEBI" id="CHEBI:15377"/>
        <dbReference type="ChEBI" id="CHEBI:15378"/>
        <dbReference type="ChEBI" id="CHEBI:29985"/>
        <dbReference type="ChEBI" id="CHEBI:30616"/>
        <dbReference type="ChEBI" id="CHEBI:43474"/>
        <dbReference type="ChEBI" id="CHEBI:58359"/>
        <dbReference type="ChEBI" id="CHEBI:147286"/>
        <dbReference type="ChEBI" id="CHEBI:147287"/>
        <dbReference type="ChEBI" id="CHEBI:456216"/>
        <dbReference type="EC" id="6.3.5.3"/>
    </reaction>
</comment>
<comment type="catalytic activity">
    <reaction evidence="1">
        <text>L-glutamine + H2O = L-glutamate + NH4(+)</text>
        <dbReference type="Rhea" id="RHEA:15889"/>
        <dbReference type="ChEBI" id="CHEBI:15377"/>
        <dbReference type="ChEBI" id="CHEBI:28938"/>
        <dbReference type="ChEBI" id="CHEBI:29985"/>
        <dbReference type="ChEBI" id="CHEBI:58359"/>
        <dbReference type="EC" id="3.5.1.2"/>
    </reaction>
</comment>
<comment type="pathway">
    <text evidence="1">Purine metabolism; IMP biosynthesis via de novo pathway; 5-amino-1-(5-phospho-D-ribosyl)imidazole from N(2)-formyl-N(1)-(5-phospho-D-ribosyl)glycinamide: step 1/2.</text>
</comment>
<comment type="subunit">
    <text evidence="1">Part of the FGAM synthase complex composed of 1 PurL, 1 PurQ and 2 PurS subunits.</text>
</comment>
<comment type="subcellular location">
    <subcellularLocation>
        <location evidence="1">Cytoplasm</location>
    </subcellularLocation>
</comment>
<protein>
    <recommendedName>
        <fullName evidence="1">Phosphoribosylformylglycinamidine synthase subunit PurQ</fullName>
        <shortName evidence="1">FGAM synthase</shortName>
        <ecNumber evidence="1">6.3.5.3</ecNumber>
    </recommendedName>
    <alternativeName>
        <fullName evidence="1">Formylglycinamide ribonucleotide amidotransferase subunit I</fullName>
        <shortName evidence="1">FGAR amidotransferase I</shortName>
        <shortName evidence="1">FGAR-AT I</shortName>
    </alternativeName>
    <alternativeName>
        <fullName evidence="1">Glutaminase PurQ</fullName>
        <ecNumber evidence="1">3.5.1.2</ecNumber>
    </alternativeName>
    <alternativeName>
        <fullName evidence="1">Phosphoribosylformylglycinamidine synthase subunit I</fullName>
    </alternativeName>
</protein>